<reference key="1">
    <citation type="journal article" date="1997" name="Microbiology">
        <title>Sequence completion, identification and definition of the fengycin operon in Bacillus subtilis 168.</title>
        <authorList>
            <person name="Tosato V."/>
            <person name="Albertini A.M."/>
            <person name="Zotti M."/>
            <person name="Sonda S."/>
            <person name="Bruschi C.V."/>
        </authorList>
    </citation>
    <scope>NUCLEOTIDE SEQUENCE [GENOMIC DNA]</scope>
    <source>
        <strain>168</strain>
    </source>
</reference>
<reference key="2">
    <citation type="journal article" date="1997" name="Nature">
        <title>The complete genome sequence of the Gram-positive bacterium Bacillus subtilis.</title>
        <authorList>
            <person name="Kunst F."/>
            <person name="Ogasawara N."/>
            <person name="Moszer I."/>
            <person name="Albertini A.M."/>
            <person name="Alloni G."/>
            <person name="Azevedo V."/>
            <person name="Bertero M.G."/>
            <person name="Bessieres P."/>
            <person name="Bolotin A."/>
            <person name="Borchert S."/>
            <person name="Borriss R."/>
            <person name="Boursier L."/>
            <person name="Brans A."/>
            <person name="Braun M."/>
            <person name="Brignell S.C."/>
            <person name="Bron S."/>
            <person name="Brouillet S."/>
            <person name="Bruschi C.V."/>
            <person name="Caldwell B."/>
            <person name="Capuano V."/>
            <person name="Carter N.M."/>
            <person name="Choi S.-K."/>
            <person name="Codani J.-J."/>
            <person name="Connerton I.F."/>
            <person name="Cummings N.J."/>
            <person name="Daniel R.A."/>
            <person name="Denizot F."/>
            <person name="Devine K.M."/>
            <person name="Duesterhoeft A."/>
            <person name="Ehrlich S.D."/>
            <person name="Emmerson P.T."/>
            <person name="Entian K.-D."/>
            <person name="Errington J."/>
            <person name="Fabret C."/>
            <person name="Ferrari E."/>
            <person name="Foulger D."/>
            <person name="Fritz C."/>
            <person name="Fujita M."/>
            <person name="Fujita Y."/>
            <person name="Fuma S."/>
            <person name="Galizzi A."/>
            <person name="Galleron N."/>
            <person name="Ghim S.-Y."/>
            <person name="Glaser P."/>
            <person name="Goffeau A."/>
            <person name="Golightly E.J."/>
            <person name="Grandi G."/>
            <person name="Guiseppi G."/>
            <person name="Guy B.J."/>
            <person name="Haga K."/>
            <person name="Haiech J."/>
            <person name="Harwood C.R."/>
            <person name="Henaut A."/>
            <person name="Hilbert H."/>
            <person name="Holsappel S."/>
            <person name="Hosono S."/>
            <person name="Hullo M.-F."/>
            <person name="Itaya M."/>
            <person name="Jones L.-M."/>
            <person name="Joris B."/>
            <person name="Karamata D."/>
            <person name="Kasahara Y."/>
            <person name="Klaerr-Blanchard M."/>
            <person name="Klein C."/>
            <person name="Kobayashi Y."/>
            <person name="Koetter P."/>
            <person name="Koningstein G."/>
            <person name="Krogh S."/>
            <person name="Kumano M."/>
            <person name="Kurita K."/>
            <person name="Lapidus A."/>
            <person name="Lardinois S."/>
            <person name="Lauber J."/>
            <person name="Lazarevic V."/>
            <person name="Lee S.-M."/>
            <person name="Levine A."/>
            <person name="Liu H."/>
            <person name="Masuda S."/>
            <person name="Mauel C."/>
            <person name="Medigue C."/>
            <person name="Medina N."/>
            <person name="Mellado R.P."/>
            <person name="Mizuno M."/>
            <person name="Moestl D."/>
            <person name="Nakai S."/>
            <person name="Noback M."/>
            <person name="Noone D."/>
            <person name="O'Reilly M."/>
            <person name="Ogawa K."/>
            <person name="Ogiwara A."/>
            <person name="Oudega B."/>
            <person name="Park S.-H."/>
            <person name="Parro V."/>
            <person name="Pohl T.M."/>
            <person name="Portetelle D."/>
            <person name="Porwollik S."/>
            <person name="Prescott A.M."/>
            <person name="Presecan E."/>
            <person name="Pujic P."/>
            <person name="Purnelle B."/>
            <person name="Rapoport G."/>
            <person name="Rey M."/>
            <person name="Reynolds S."/>
            <person name="Rieger M."/>
            <person name="Rivolta C."/>
            <person name="Rocha E."/>
            <person name="Roche B."/>
            <person name="Rose M."/>
            <person name="Sadaie Y."/>
            <person name="Sato T."/>
            <person name="Scanlan E."/>
            <person name="Schleich S."/>
            <person name="Schroeter R."/>
            <person name="Scoffone F."/>
            <person name="Sekiguchi J."/>
            <person name="Sekowska A."/>
            <person name="Seror S.J."/>
            <person name="Serror P."/>
            <person name="Shin B.-S."/>
            <person name="Soldo B."/>
            <person name="Sorokin A."/>
            <person name="Tacconi E."/>
            <person name="Takagi T."/>
            <person name="Takahashi H."/>
            <person name="Takemaru K."/>
            <person name="Takeuchi M."/>
            <person name="Tamakoshi A."/>
            <person name="Tanaka T."/>
            <person name="Terpstra P."/>
            <person name="Tognoni A."/>
            <person name="Tosato V."/>
            <person name="Uchiyama S."/>
            <person name="Vandenbol M."/>
            <person name="Vannier F."/>
            <person name="Vassarotti A."/>
            <person name="Viari A."/>
            <person name="Wambutt R."/>
            <person name="Wedler E."/>
            <person name="Wedler H."/>
            <person name="Weitzenegger T."/>
            <person name="Winters P."/>
            <person name="Wipat A."/>
            <person name="Yamamoto H."/>
            <person name="Yamane K."/>
            <person name="Yasumoto K."/>
            <person name="Yata K."/>
            <person name="Yoshida K."/>
            <person name="Yoshikawa H.-F."/>
            <person name="Zumstein E."/>
            <person name="Yoshikawa H."/>
            <person name="Danchin A."/>
        </authorList>
    </citation>
    <scope>NUCLEOTIDE SEQUENCE [LARGE SCALE GENOMIC DNA]</scope>
    <source>
        <strain>168</strain>
    </source>
</reference>
<keyword id="KW-0067">ATP-binding</keyword>
<keyword id="KW-0436">Ligase</keyword>
<keyword id="KW-0547">Nucleotide-binding</keyword>
<keyword id="KW-1185">Reference proteome</keyword>
<protein>
    <recommendedName>
        <fullName>Putative acyl-CoA synthetase YngI</fullName>
        <ecNumber>6.2.1.-</ecNumber>
    </recommendedName>
</protein>
<dbReference type="EC" id="6.2.1.-"/>
<dbReference type="EMBL" id="Y13917">
    <property type="protein sequence ID" value="CAA74222.1"/>
    <property type="status" value="ALT_FRAME"/>
    <property type="molecule type" value="Genomic_DNA"/>
</dbReference>
<dbReference type="EMBL" id="AL009126">
    <property type="protein sequence ID" value="CAB13708.1"/>
    <property type="molecule type" value="Genomic_DNA"/>
</dbReference>
<dbReference type="PIR" id="F69893">
    <property type="entry name" value="F69893"/>
</dbReference>
<dbReference type="RefSeq" id="WP_003244755.1">
    <property type="nucleotide sequence ID" value="NZ_OZ025638.1"/>
</dbReference>
<dbReference type="SMR" id="O31826"/>
<dbReference type="FunCoup" id="O31826">
    <property type="interactions" value="431"/>
</dbReference>
<dbReference type="STRING" id="224308.BSU18250"/>
<dbReference type="PaxDb" id="224308-BSU18250"/>
<dbReference type="DNASU" id="939571"/>
<dbReference type="EnsemblBacteria" id="CAB13708">
    <property type="protein sequence ID" value="CAB13708"/>
    <property type="gene ID" value="BSU_18250"/>
</dbReference>
<dbReference type="GeneID" id="939571"/>
<dbReference type="KEGG" id="bsu:BSU18250"/>
<dbReference type="PATRIC" id="fig|224308.179.peg.1991"/>
<dbReference type="eggNOG" id="COG0318">
    <property type="taxonomic scope" value="Bacteria"/>
</dbReference>
<dbReference type="InParanoid" id="O31826"/>
<dbReference type="OrthoDB" id="9803968at2"/>
<dbReference type="PhylomeDB" id="O31826"/>
<dbReference type="BioCyc" id="BSUB:BSU18250-MONOMER"/>
<dbReference type="Proteomes" id="UP000001570">
    <property type="component" value="Chromosome"/>
</dbReference>
<dbReference type="GO" id="GO:0005524">
    <property type="term" value="F:ATP binding"/>
    <property type="evidence" value="ECO:0007669"/>
    <property type="project" value="UniProtKB-KW"/>
</dbReference>
<dbReference type="GO" id="GO:0031956">
    <property type="term" value="F:medium-chain fatty acid-CoA ligase activity"/>
    <property type="evidence" value="ECO:0000318"/>
    <property type="project" value="GO_Central"/>
</dbReference>
<dbReference type="GO" id="GO:0006631">
    <property type="term" value="P:fatty acid metabolic process"/>
    <property type="evidence" value="ECO:0000318"/>
    <property type="project" value="GO_Central"/>
</dbReference>
<dbReference type="CDD" id="cd05917">
    <property type="entry name" value="FACL_like_2"/>
    <property type="match status" value="1"/>
</dbReference>
<dbReference type="FunFam" id="3.30.300.30:FF:000008">
    <property type="entry name" value="2,3-dihydroxybenzoate-AMP ligase"/>
    <property type="match status" value="1"/>
</dbReference>
<dbReference type="FunFam" id="3.40.50.12780:FF:000003">
    <property type="entry name" value="Long-chain-fatty-acid--CoA ligase FadD"/>
    <property type="match status" value="1"/>
</dbReference>
<dbReference type="Gene3D" id="3.30.300.30">
    <property type="match status" value="1"/>
</dbReference>
<dbReference type="Gene3D" id="3.40.50.980">
    <property type="match status" value="2"/>
</dbReference>
<dbReference type="Gene3D" id="2.30.38.10">
    <property type="entry name" value="Luciferase, Domain 3"/>
    <property type="match status" value="1"/>
</dbReference>
<dbReference type="InterPro" id="IPR025110">
    <property type="entry name" value="AMP-bd_C"/>
</dbReference>
<dbReference type="InterPro" id="IPR045851">
    <property type="entry name" value="AMP-bd_C_sf"/>
</dbReference>
<dbReference type="InterPro" id="IPR020845">
    <property type="entry name" value="AMP-binding_CS"/>
</dbReference>
<dbReference type="InterPro" id="IPR000873">
    <property type="entry name" value="AMP-dep_synth/lig_dom"/>
</dbReference>
<dbReference type="NCBIfam" id="NF009233">
    <property type="entry name" value="PRK12583.1"/>
    <property type="match status" value="1"/>
</dbReference>
<dbReference type="PANTHER" id="PTHR43201">
    <property type="entry name" value="ACYL-COA SYNTHETASE"/>
    <property type="match status" value="1"/>
</dbReference>
<dbReference type="PANTHER" id="PTHR43201:SF5">
    <property type="entry name" value="MEDIUM-CHAIN ACYL-COA LIGASE ACSF2, MITOCHONDRIAL"/>
    <property type="match status" value="1"/>
</dbReference>
<dbReference type="Pfam" id="PF00501">
    <property type="entry name" value="AMP-binding"/>
    <property type="match status" value="1"/>
</dbReference>
<dbReference type="Pfam" id="PF13193">
    <property type="entry name" value="AMP-binding_C"/>
    <property type="match status" value="1"/>
</dbReference>
<dbReference type="SUPFAM" id="SSF56801">
    <property type="entry name" value="Acetyl-CoA synthetase-like"/>
    <property type="match status" value="1"/>
</dbReference>
<dbReference type="PROSITE" id="PS00455">
    <property type="entry name" value="AMP_BINDING"/>
    <property type="match status" value="1"/>
</dbReference>
<comment type="similarity">
    <text evidence="2">Belongs to the ATP-dependent AMP-binding enzyme family.</text>
</comment>
<comment type="sequence caution" evidence="2">
    <conflict type="frameshift">
        <sequence resource="EMBL-CDS" id="CAA74222"/>
    </conflict>
</comment>
<feature type="chain" id="PRO_0000389244" description="Putative acyl-CoA synthetase YngI">
    <location>
        <begin position="1"/>
        <end position="549"/>
    </location>
</feature>
<feature type="binding site" evidence="1">
    <location>
        <begin position="198"/>
        <end position="206"/>
    </location>
    <ligand>
        <name>ATP</name>
        <dbReference type="ChEBI" id="CHEBI:30616"/>
    </ligand>
</feature>
<feature type="binding site" evidence="1">
    <location>
        <position position="423"/>
    </location>
    <ligand>
        <name>ATP</name>
        <dbReference type="ChEBI" id="CHEBI:30616"/>
    </ligand>
</feature>
<feature type="binding site" evidence="1">
    <location>
        <position position="438"/>
    </location>
    <ligand>
        <name>ATP</name>
        <dbReference type="ChEBI" id="CHEBI:30616"/>
    </ligand>
</feature>
<feature type="binding site" evidence="1">
    <location>
        <position position="529"/>
    </location>
    <ligand>
        <name>ATP</name>
        <dbReference type="ChEBI" id="CHEBI:30616"/>
    </ligand>
</feature>
<evidence type="ECO:0000250" key="1"/>
<evidence type="ECO:0000305" key="2"/>
<proteinExistence type="inferred from homology"/>
<accession>O31826</accession>
<accession>O32301</accession>
<sequence length="549" mass="61429">MAELIHSTIGRLLEQTADAYPDRDAVVYPDRNIRYTYAQFDSLCRQTAKGLMRMGIGKGDHVAIWASNISEWLAVQFATAKIGAVLVTVNTNYQAHELDYLLKQSDAAALIIMDSYRGTSYPDIVNSLIPELQEAKPGQLKSERYPFLKTLIYIGNKRLSGMYHWDDTEILAKTVTDAELEERMNSLDKDNVINMQYTSGTTGFPKGVMLTHFNVINNAANIAECMALTSQDRMCIPVPFFHCFGCVLGVLACVSVGAAMIPVQEFDPVTVLKTVEKEKCTVLHGVPTMFIAELHHPDFDAYDLSTLRTGIMAGSPCPSEVMKAVIERMGMKDITIAYGQTEASPVITQTRANDSFIRRVETTGRALPHTEVKIVEPGTCQEVQRGMQGELCTRGYHVMKGYYKDKDATRKAINHDGWLFTGDLAVMDEDGYCRITGRLKDMLIRGGENIYPREIEEFLYQHPAVLDVQVVGVPDAKFGEEAAAWIKLKDGKSVSPDELKAYCKGKIARHKIPRYVIFTDDYPMTASGKIQKYKLREKTIEMFNLSSSQ</sequence>
<organism>
    <name type="scientific">Bacillus subtilis (strain 168)</name>
    <dbReference type="NCBI Taxonomy" id="224308"/>
    <lineage>
        <taxon>Bacteria</taxon>
        <taxon>Bacillati</taxon>
        <taxon>Bacillota</taxon>
        <taxon>Bacilli</taxon>
        <taxon>Bacillales</taxon>
        <taxon>Bacillaceae</taxon>
        <taxon>Bacillus</taxon>
    </lineage>
</organism>
<gene>
    <name type="primary">yngI</name>
    <name type="ordered locus">BSU18250</name>
</gene>
<name>YNGI_BACSU</name>